<dbReference type="EC" id="2.3.2.27" evidence="2"/>
<dbReference type="EMBL" id="GL192549">
    <property type="protein sequence ID" value="EFB20934.1"/>
    <property type="molecule type" value="Genomic_DNA"/>
</dbReference>
<dbReference type="RefSeq" id="XP_002917648.1">
    <property type="nucleotide sequence ID" value="XM_002917602.4"/>
</dbReference>
<dbReference type="RefSeq" id="XP_034516194.1">
    <property type="nucleotide sequence ID" value="XM_034660303.1"/>
</dbReference>
<dbReference type="SMR" id="D2H788"/>
<dbReference type="STRING" id="9646.ENSAMEP00000021351"/>
<dbReference type="Ensembl" id="ENSAMET00000022120.2">
    <property type="protein sequence ID" value="ENSAMEP00000021351.1"/>
    <property type="gene ID" value="ENSAMEG00000020297.2"/>
</dbReference>
<dbReference type="GeneID" id="100469497"/>
<dbReference type="KEGG" id="aml:100469497"/>
<dbReference type="CTD" id="221687"/>
<dbReference type="eggNOG" id="KOG2177">
    <property type="taxonomic scope" value="Eukaryota"/>
</dbReference>
<dbReference type="GeneTree" id="ENSGT00730000111020"/>
<dbReference type="HOGENOM" id="CLU_100624_0_0_1"/>
<dbReference type="InParanoid" id="D2H788"/>
<dbReference type="OMA" id="SWTVWNC"/>
<dbReference type="OrthoDB" id="8936585at2759"/>
<dbReference type="TreeFam" id="TF331690"/>
<dbReference type="UniPathway" id="UPA00143"/>
<dbReference type="Proteomes" id="UP000008912">
    <property type="component" value="Unassembled WGS sequence"/>
</dbReference>
<dbReference type="GO" id="GO:0005737">
    <property type="term" value="C:cytoplasm"/>
    <property type="evidence" value="ECO:0007669"/>
    <property type="project" value="UniProtKB-SubCell"/>
</dbReference>
<dbReference type="GO" id="GO:0016020">
    <property type="term" value="C:membrane"/>
    <property type="evidence" value="ECO:0007669"/>
    <property type="project" value="UniProtKB-SubCell"/>
</dbReference>
<dbReference type="GO" id="GO:0004842">
    <property type="term" value="F:ubiquitin-protein transferase activity"/>
    <property type="evidence" value="ECO:0007669"/>
    <property type="project" value="Ensembl"/>
</dbReference>
<dbReference type="GO" id="GO:0008270">
    <property type="term" value="F:zinc ion binding"/>
    <property type="evidence" value="ECO:0007669"/>
    <property type="project" value="UniProtKB-KW"/>
</dbReference>
<dbReference type="GO" id="GO:0016567">
    <property type="term" value="P:protein ubiquitination"/>
    <property type="evidence" value="ECO:0000250"/>
    <property type="project" value="UniProtKB"/>
</dbReference>
<dbReference type="CDD" id="cd16555">
    <property type="entry name" value="RING-HC_RNF182"/>
    <property type="match status" value="1"/>
</dbReference>
<dbReference type="FunFam" id="3.30.40.10:FF:000319">
    <property type="entry name" value="E3 ubiquitin-protein ligase RNF182"/>
    <property type="match status" value="1"/>
</dbReference>
<dbReference type="Gene3D" id="3.30.40.10">
    <property type="entry name" value="Zinc/RING finger domain, C3HC4 (zinc finger)"/>
    <property type="match status" value="1"/>
</dbReference>
<dbReference type="InterPro" id="IPR042285">
    <property type="entry name" value="RNF182"/>
</dbReference>
<dbReference type="InterPro" id="IPR047986">
    <property type="entry name" value="RNF182_RING-HC"/>
</dbReference>
<dbReference type="InterPro" id="IPR001841">
    <property type="entry name" value="Znf_RING"/>
</dbReference>
<dbReference type="InterPro" id="IPR013083">
    <property type="entry name" value="Znf_RING/FYVE/PHD"/>
</dbReference>
<dbReference type="InterPro" id="IPR017907">
    <property type="entry name" value="Znf_RING_CS"/>
</dbReference>
<dbReference type="PANTHER" id="PTHR46675">
    <property type="entry name" value="E3 UBIQUITIN-PROTEIN LIGASE RNF182"/>
    <property type="match status" value="1"/>
</dbReference>
<dbReference type="PANTHER" id="PTHR46675:SF2">
    <property type="entry name" value="E3 UBIQUITIN-PROTEIN LIGASE RNF182"/>
    <property type="match status" value="1"/>
</dbReference>
<dbReference type="SMART" id="SM00184">
    <property type="entry name" value="RING"/>
    <property type="match status" value="1"/>
</dbReference>
<dbReference type="SUPFAM" id="SSF57850">
    <property type="entry name" value="RING/U-box"/>
    <property type="match status" value="1"/>
</dbReference>
<dbReference type="PROSITE" id="PS00518">
    <property type="entry name" value="ZF_RING_1"/>
    <property type="match status" value="1"/>
</dbReference>
<dbReference type="PROSITE" id="PS50089">
    <property type="entry name" value="ZF_RING_2"/>
    <property type="match status" value="1"/>
</dbReference>
<name>RN182_AILME</name>
<keyword id="KW-0963">Cytoplasm</keyword>
<keyword id="KW-0472">Membrane</keyword>
<keyword id="KW-0479">Metal-binding</keyword>
<keyword id="KW-1185">Reference proteome</keyword>
<keyword id="KW-0808">Transferase</keyword>
<keyword id="KW-0812">Transmembrane</keyword>
<keyword id="KW-1133">Transmembrane helix</keyword>
<keyword id="KW-0833">Ubl conjugation pathway</keyword>
<keyword id="KW-0862">Zinc</keyword>
<keyword id="KW-0863">Zinc-finger</keyword>
<reference key="1">
    <citation type="journal article" date="2010" name="Nature">
        <title>The sequence and de novo assembly of the giant panda genome.</title>
        <authorList>
            <person name="Li R."/>
            <person name="Fan W."/>
            <person name="Tian G."/>
            <person name="Zhu H."/>
            <person name="He L."/>
            <person name="Cai J."/>
            <person name="Huang Q."/>
            <person name="Cai Q."/>
            <person name="Li B."/>
            <person name="Bai Y."/>
            <person name="Zhang Z."/>
            <person name="Zhang Y."/>
            <person name="Wang W."/>
            <person name="Li J."/>
            <person name="Wei F."/>
            <person name="Li H."/>
            <person name="Jian M."/>
            <person name="Li J."/>
            <person name="Zhang Z."/>
            <person name="Nielsen R."/>
            <person name="Li D."/>
            <person name="Gu W."/>
            <person name="Yang Z."/>
            <person name="Xuan Z."/>
            <person name="Ryder O.A."/>
            <person name="Leung F.C."/>
            <person name="Zhou Y."/>
            <person name="Cao J."/>
            <person name="Sun X."/>
            <person name="Fu Y."/>
            <person name="Fang X."/>
            <person name="Guo X."/>
            <person name="Wang B."/>
            <person name="Hou R."/>
            <person name="Shen F."/>
            <person name="Mu B."/>
            <person name="Ni P."/>
            <person name="Lin R."/>
            <person name="Qian W."/>
            <person name="Wang G."/>
            <person name="Yu C."/>
            <person name="Nie W."/>
            <person name="Wang J."/>
            <person name="Wu Z."/>
            <person name="Liang H."/>
            <person name="Min J."/>
            <person name="Wu Q."/>
            <person name="Cheng S."/>
            <person name="Ruan J."/>
            <person name="Wang M."/>
            <person name="Shi Z."/>
            <person name="Wen M."/>
            <person name="Liu B."/>
            <person name="Ren X."/>
            <person name="Zheng H."/>
            <person name="Dong D."/>
            <person name="Cook K."/>
            <person name="Shan G."/>
            <person name="Zhang H."/>
            <person name="Kosiol C."/>
            <person name="Xie X."/>
            <person name="Lu Z."/>
            <person name="Zheng H."/>
            <person name="Li Y."/>
            <person name="Steiner C.C."/>
            <person name="Lam T.T."/>
            <person name="Lin S."/>
            <person name="Zhang Q."/>
            <person name="Li G."/>
            <person name="Tian J."/>
            <person name="Gong T."/>
            <person name="Liu H."/>
            <person name="Zhang D."/>
            <person name="Fang L."/>
            <person name="Ye C."/>
            <person name="Zhang J."/>
            <person name="Hu W."/>
            <person name="Xu A."/>
            <person name="Ren Y."/>
            <person name="Zhang G."/>
            <person name="Bruford M.W."/>
            <person name="Li Q."/>
            <person name="Ma L."/>
            <person name="Guo Y."/>
            <person name="An N."/>
            <person name="Hu Y."/>
            <person name="Zheng Y."/>
            <person name="Shi Y."/>
            <person name="Li Z."/>
            <person name="Liu Q."/>
            <person name="Chen Y."/>
            <person name="Zhao J."/>
            <person name="Qu N."/>
            <person name="Zhao S."/>
            <person name="Tian F."/>
            <person name="Wang X."/>
            <person name="Wang H."/>
            <person name="Xu L."/>
            <person name="Liu X."/>
            <person name="Vinar T."/>
            <person name="Wang Y."/>
            <person name="Lam T.W."/>
            <person name="Yiu S.M."/>
            <person name="Liu S."/>
            <person name="Zhang H."/>
            <person name="Li D."/>
            <person name="Huang Y."/>
            <person name="Wang X."/>
            <person name="Yang G."/>
            <person name="Jiang Z."/>
            <person name="Wang J."/>
            <person name="Qin N."/>
            <person name="Li L."/>
            <person name="Li J."/>
            <person name="Bolund L."/>
            <person name="Kristiansen K."/>
            <person name="Wong G.K."/>
            <person name="Olson M."/>
            <person name="Zhang X."/>
            <person name="Li S."/>
            <person name="Yang H."/>
            <person name="Wang J."/>
            <person name="Wang J."/>
        </authorList>
    </citation>
    <scope>NUCLEOTIDE SEQUENCE [LARGE SCALE GENOMIC DNA]</scope>
</reference>
<gene>
    <name type="primary">RNF182</name>
    <name type="ORF">PANDA_005987</name>
</gene>
<sequence>MASQSPDEAAEAQVSDELECKICYNRYNLKQRKPKVLECCHRVCAKCLYKIIDFGDSPQGVIVCPFCRFETCLPDEEVSSLPDDSNILVNLTCGGKGKKGLPENPTELLLTPKRLASLVSPSHTSSNCLVITIMEVQRESSPSLSSTPVVEFYRPASFDSVTTVSHNWTVWKCTSLLFQTSIRVLVWLLGLLYFSSLPLGIYLLVSKKVTLGVVFVSLVPSSLVILMVYGFCQCVCHEFLDCVAPSS</sequence>
<accession>D2H788</accession>
<feature type="chain" id="PRO_0000395670" description="E3 ubiquitin-protein ligase RNF182">
    <location>
        <begin position="1"/>
        <end position="247"/>
    </location>
</feature>
<feature type="transmembrane region" description="Helical" evidence="3">
    <location>
        <begin position="184"/>
        <end position="204"/>
    </location>
</feature>
<feature type="transmembrane region" description="Helical" evidence="3">
    <location>
        <begin position="211"/>
        <end position="231"/>
    </location>
</feature>
<feature type="zinc finger region" description="RING-type" evidence="4">
    <location>
        <begin position="20"/>
        <end position="68"/>
    </location>
</feature>
<comment type="function">
    <text evidence="2">E3 ubiquitin-protein ligase that mediates the ubiquitination of ATP6V0C and targets it to degradation via the ubiquitin-proteasome pathway. Also plays a role in the inhibition of TLR-triggered innate immune response by mediating 'Lys'-48-linked ubiquitination and subsequent degradation of NF-kappa-B component RELA.</text>
</comment>
<comment type="catalytic activity">
    <reaction>
        <text>S-ubiquitinyl-[E2 ubiquitin-conjugating enzyme]-L-cysteine + [acceptor protein]-L-lysine = [E2 ubiquitin-conjugating enzyme]-L-cysteine + N(6)-ubiquitinyl-[acceptor protein]-L-lysine.</text>
        <dbReference type="EC" id="2.3.2.27"/>
    </reaction>
</comment>
<comment type="pathway">
    <text evidence="2">Protein modification; protein ubiquitination.</text>
</comment>
<comment type="subunit">
    <text evidence="2">Interacts with ATP6V0C.</text>
</comment>
<comment type="subcellular location">
    <subcellularLocation>
        <location evidence="2">Membrane</location>
        <topology evidence="2">Multi-pass membrane protein</topology>
    </subcellularLocation>
    <subcellularLocation>
        <location evidence="2">Cytoplasm</location>
    </subcellularLocation>
</comment>
<comment type="domain">
    <text evidence="1">The RING-type zinc finger domain is required for E3 ligase activity.</text>
</comment>
<proteinExistence type="inferred from homology"/>
<evidence type="ECO:0000250" key="1"/>
<evidence type="ECO:0000250" key="2">
    <source>
        <dbReference type="UniProtKB" id="Q8N6D2"/>
    </source>
</evidence>
<evidence type="ECO:0000255" key="3"/>
<evidence type="ECO:0000255" key="4">
    <source>
        <dbReference type="PROSITE-ProRule" id="PRU00175"/>
    </source>
</evidence>
<evidence type="ECO:0000305" key="5"/>
<protein>
    <recommendedName>
        <fullName>E3 ubiquitin-protein ligase RNF182</fullName>
        <ecNumber evidence="2">2.3.2.27</ecNumber>
    </recommendedName>
    <alternativeName>
        <fullName>RING finger protein 182</fullName>
    </alternativeName>
    <alternativeName>
        <fullName evidence="5">RING-type E3 ubiquitin transferase RNF182</fullName>
    </alternativeName>
</protein>
<organism>
    <name type="scientific">Ailuropoda melanoleuca</name>
    <name type="common">Giant panda</name>
    <dbReference type="NCBI Taxonomy" id="9646"/>
    <lineage>
        <taxon>Eukaryota</taxon>
        <taxon>Metazoa</taxon>
        <taxon>Chordata</taxon>
        <taxon>Craniata</taxon>
        <taxon>Vertebrata</taxon>
        <taxon>Euteleostomi</taxon>
        <taxon>Mammalia</taxon>
        <taxon>Eutheria</taxon>
        <taxon>Laurasiatheria</taxon>
        <taxon>Carnivora</taxon>
        <taxon>Caniformia</taxon>
        <taxon>Ursidae</taxon>
        <taxon>Ailuropoda</taxon>
    </lineage>
</organism>